<gene>
    <name evidence="1" type="primary">lpxC</name>
    <name type="ordered locus">LIC_11633</name>
</gene>
<comment type="function">
    <text evidence="1">Catalyzes the hydrolysis of UDP-3-O-myristoyl-N-acetylglucosamine to form UDP-3-O-myristoylglucosamine and acetate, the committed step in lipid A biosynthesis.</text>
</comment>
<comment type="catalytic activity">
    <reaction evidence="1">
        <text>a UDP-3-O-[(3R)-3-hydroxyacyl]-N-acetyl-alpha-D-glucosamine + H2O = a UDP-3-O-[(3R)-3-hydroxyacyl]-alpha-D-glucosamine + acetate</text>
        <dbReference type="Rhea" id="RHEA:67816"/>
        <dbReference type="ChEBI" id="CHEBI:15377"/>
        <dbReference type="ChEBI" id="CHEBI:30089"/>
        <dbReference type="ChEBI" id="CHEBI:137740"/>
        <dbReference type="ChEBI" id="CHEBI:173225"/>
        <dbReference type="EC" id="3.5.1.108"/>
    </reaction>
</comment>
<comment type="cofactor">
    <cofactor evidence="1">
        <name>Zn(2+)</name>
        <dbReference type="ChEBI" id="CHEBI:29105"/>
    </cofactor>
</comment>
<comment type="pathway">
    <text evidence="1">Glycolipid biosynthesis; lipid IV(A) biosynthesis; lipid IV(A) from (3R)-3-hydroxytetradecanoyl-[acyl-carrier-protein] and UDP-N-acetyl-alpha-D-glucosamine: step 2/6.</text>
</comment>
<comment type="similarity">
    <text evidence="1">Belongs to the LpxC family.</text>
</comment>
<comment type="sequence caution" evidence="2">
    <conflict type="erroneous initiation">
        <sequence resource="EMBL-CDS" id="AAS70228"/>
    </conflict>
</comment>
<name>LPXC_LEPIC</name>
<accession>Q72RV5</accession>
<protein>
    <recommendedName>
        <fullName evidence="1">UDP-3-O-acyl-N-acetylglucosamine deacetylase</fullName>
        <shortName evidence="1">UDP-3-O-acyl-GlcNAc deacetylase</shortName>
        <ecNumber evidence="1">3.5.1.108</ecNumber>
    </recommendedName>
    <alternativeName>
        <fullName evidence="1">UDP-3-O-[R-3-hydroxymyristoyl]-N-acetylglucosamine deacetylase</fullName>
    </alternativeName>
</protein>
<evidence type="ECO:0000255" key="1">
    <source>
        <dbReference type="HAMAP-Rule" id="MF_00388"/>
    </source>
</evidence>
<evidence type="ECO:0000305" key="2"/>
<organism>
    <name type="scientific">Leptospira interrogans serogroup Icterohaemorrhagiae serovar copenhageni (strain Fiocruz L1-130)</name>
    <dbReference type="NCBI Taxonomy" id="267671"/>
    <lineage>
        <taxon>Bacteria</taxon>
        <taxon>Pseudomonadati</taxon>
        <taxon>Spirochaetota</taxon>
        <taxon>Spirochaetia</taxon>
        <taxon>Leptospirales</taxon>
        <taxon>Leptospiraceae</taxon>
        <taxon>Leptospira</taxon>
    </lineage>
</organism>
<dbReference type="EC" id="3.5.1.108" evidence="1"/>
<dbReference type="EMBL" id="AE016823">
    <property type="protein sequence ID" value="AAS70228.1"/>
    <property type="status" value="ALT_INIT"/>
    <property type="molecule type" value="Genomic_DNA"/>
</dbReference>
<dbReference type="SMR" id="Q72RV5"/>
<dbReference type="KEGG" id="lic:LIC_11633"/>
<dbReference type="HOGENOM" id="CLU_046528_1_0_12"/>
<dbReference type="UniPathway" id="UPA00359">
    <property type="reaction ID" value="UER00478"/>
</dbReference>
<dbReference type="Proteomes" id="UP000007037">
    <property type="component" value="Chromosome I"/>
</dbReference>
<dbReference type="GO" id="GO:0016020">
    <property type="term" value="C:membrane"/>
    <property type="evidence" value="ECO:0007669"/>
    <property type="project" value="GOC"/>
</dbReference>
<dbReference type="GO" id="GO:0046872">
    <property type="term" value="F:metal ion binding"/>
    <property type="evidence" value="ECO:0007669"/>
    <property type="project" value="UniProtKB-KW"/>
</dbReference>
<dbReference type="GO" id="GO:0103117">
    <property type="term" value="F:UDP-3-O-acyl-N-acetylglucosamine deacetylase activity"/>
    <property type="evidence" value="ECO:0007669"/>
    <property type="project" value="UniProtKB-UniRule"/>
</dbReference>
<dbReference type="GO" id="GO:0009245">
    <property type="term" value="P:lipid A biosynthetic process"/>
    <property type="evidence" value="ECO:0007669"/>
    <property type="project" value="UniProtKB-UniRule"/>
</dbReference>
<dbReference type="Gene3D" id="3.30.230.20">
    <property type="entry name" value="lpxc deacetylase, domain 1"/>
    <property type="match status" value="1"/>
</dbReference>
<dbReference type="Gene3D" id="3.30.1700.10">
    <property type="entry name" value="lpxc deacetylase, domain 2"/>
    <property type="match status" value="1"/>
</dbReference>
<dbReference type="HAMAP" id="MF_00388">
    <property type="entry name" value="LpxC"/>
    <property type="match status" value="1"/>
</dbReference>
<dbReference type="InterPro" id="IPR020568">
    <property type="entry name" value="Ribosomal_Su5_D2-typ_SF"/>
</dbReference>
<dbReference type="InterPro" id="IPR004463">
    <property type="entry name" value="UDP-acyl_GlcNac_deAcase"/>
</dbReference>
<dbReference type="InterPro" id="IPR011334">
    <property type="entry name" value="UDP-acyl_GlcNac_deAcase_C"/>
</dbReference>
<dbReference type="InterPro" id="IPR015870">
    <property type="entry name" value="UDP-acyl_N-AcGlcN_deAcase_N"/>
</dbReference>
<dbReference type="NCBIfam" id="TIGR00325">
    <property type="entry name" value="lpxC"/>
    <property type="match status" value="1"/>
</dbReference>
<dbReference type="PANTHER" id="PTHR33694">
    <property type="entry name" value="UDP-3-O-ACYL-N-ACETYLGLUCOSAMINE DEACETYLASE 1, MITOCHONDRIAL-RELATED"/>
    <property type="match status" value="1"/>
</dbReference>
<dbReference type="PANTHER" id="PTHR33694:SF1">
    <property type="entry name" value="UDP-3-O-ACYL-N-ACETYLGLUCOSAMINE DEACETYLASE 1, MITOCHONDRIAL-RELATED"/>
    <property type="match status" value="1"/>
</dbReference>
<dbReference type="Pfam" id="PF03331">
    <property type="entry name" value="LpxC"/>
    <property type="match status" value="1"/>
</dbReference>
<dbReference type="SUPFAM" id="SSF54211">
    <property type="entry name" value="Ribosomal protein S5 domain 2-like"/>
    <property type="match status" value="2"/>
</dbReference>
<keyword id="KW-0378">Hydrolase</keyword>
<keyword id="KW-0441">Lipid A biosynthesis</keyword>
<keyword id="KW-0444">Lipid biosynthesis</keyword>
<keyword id="KW-0443">Lipid metabolism</keyword>
<keyword id="KW-0479">Metal-binding</keyword>
<keyword id="KW-0862">Zinc</keyword>
<feature type="chain" id="PRO_0000191937" description="UDP-3-O-acyl-N-acetylglucosamine deacetylase">
    <location>
        <begin position="1"/>
        <end position="301"/>
    </location>
</feature>
<feature type="active site" description="Proton donor" evidence="1">
    <location>
        <position position="264"/>
    </location>
</feature>
<feature type="binding site" evidence="1">
    <location>
        <position position="81"/>
    </location>
    <ligand>
        <name>Zn(2+)</name>
        <dbReference type="ChEBI" id="CHEBI:29105"/>
    </ligand>
</feature>
<feature type="binding site" evidence="1">
    <location>
        <position position="237"/>
    </location>
    <ligand>
        <name>Zn(2+)</name>
        <dbReference type="ChEBI" id="CHEBI:29105"/>
    </ligand>
</feature>
<feature type="binding site" evidence="1">
    <location>
        <position position="241"/>
    </location>
    <ligand>
        <name>Zn(2+)</name>
        <dbReference type="ChEBI" id="CHEBI:29105"/>
    </ligand>
</feature>
<reference key="1">
    <citation type="journal article" date="2004" name="J. Bacteriol.">
        <title>Comparative genomics of two Leptospira interrogans serovars reveals novel insights into physiology and pathogenesis.</title>
        <authorList>
            <person name="Nascimento A.L.T.O."/>
            <person name="Ko A.I."/>
            <person name="Martins E.A.L."/>
            <person name="Monteiro-Vitorello C.B."/>
            <person name="Ho P.L."/>
            <person name="Haake D.A."/>
            <person name="Verjovski-Almeida S."/>
            <person name="Hartskeerl R.A."/>
            <person name="Marques M.V."/>
            <person name="Oliveira M.C."/>
            <person name="Menck C.F.M."/>
            <person name="Leite L.C.C."/>
            <person name="Carrer H."/>
            <person name="Coutinho L.L."/>
            <person name="Degrave W.M."/>
            <person name="Dellagostin O.A."/>
            <person name="El-Dorry H."/>
            <person name="Ferro E.S."/>
            <person name="Ferro M.I.T."/>
            <person name="Furlan L.R."/>
            <person name="Gamberini M."/>
            <person name="Giglioti E.A."/>
            <person name="Goes-Neto A."/>
            <person name="Goldman G.H."/>
            <person name="Goldman M.H.S."/>
            <person name="Harakava R."/>
            <person name="Jeronimo S.M.B."/>
            <person name="Junqueira-de-Azevedo I.L.M."/>
            <person name="Kimura E.T."/>
            <person name="Kuramae E.E."/>
            <person name="Lemos E.G.M."/>
            <person name="Lemos M.V.F."/>
            <person name="Marino C.L."/>
            <person name="Nunes L.R."/>
            <person name="de Oliveira R.C."/>
            <person name="Pereira G.G."/>
            <person name="Reis M.S."/>
            <person name="Schriefer A."/>
            <person name="Siqueira W.J."/>
            <person name="Sommer P."/>
            <person name="Tsai S.M."/>
            <person name="Simpson A.J.G."/>
            <person name="Ferro J.A."/>
            <person name="Camargo L.E.A."/>
            <person name="Kitajima J.P."/>
            <person name="Setubal J.C."/>
            <person name="Van Sluys M.A."/>
        </authorList>
    </citation>
    <scope>NUCLEOTIDE SEQUENCE [LARGE SCALE GENOMIC DNA]</scope>
    <source>
        <strain>Fiocruz L1-130</strain>
    </source>
</reference>
<proteinExistence type="inferred from homology"/>
<sequence>MKEILYRRSIQDTVRIKGIGLHSGKEVNLTAHPAPSGTGIVFEYRKGLEKASISAELSNVVDTSNATTLGDGIHKIQTVEHLLAAVYALGLTDLILEIDAVEVPIMDGSSLPFLQALESAGIIEYPEIVEPIYIQSPLWVVDGDKYLVLLPSDELKVTYTIDFNHPLLKGQSITVSLDREKIKQEILPARTFGFLKDVEALQARGLAMGGSLDNAIVLTQDGYLNQQLRFENECVRHKILDLFGDISIAGRPIIGHYLASKAGHALDISMAKLVMSNVTGDEISKYKSRRIPLFKRKAVVV</sequence>